<sequence>MKVCIISILGRPNVGKSSLLNKIIKYDLAIVSNVPQTTRDQIMGVYTEDGYQFVFVDTPGIHKPLNLLGESLNKEAFSSLKDIDCVLFLSPVNEDIKSGDKLILERITNAKNKIAVISKIDLAKSPDEIAKKIDGLKEYGFNKIISVSNKNDKSVDSLIEILKEYAYNAPPFYDEDYITDKSMRFMAKEYIRESAINLLTDELPHSIAVEVQDFIEEDDRITINAIIYVKKDSQKGILIGKGASMIKKIGTNARMKMSHQFDTKVTLNLKVKVSNKWINDKSALKKFGYN</sequence>
<evidence type="ECO:0000255" key="1">
    <source>
        <dbReference type="HAMAP-Rule" id="MF_00367"/>
    </source>
</evidence>
<evidence type="ECO:0000255" key="2">
    <source>
        <dbReference type="PROSITE-ProRule" id="PRU01050"/>
    </source>
</evidence>
<accession>A5IXQ6</accession>
<comment type="function">
    <text evidence="1">An essential GTPase that binds both GDP and GTP, with rapid nucleotide exchange. Plays a role in 16S rRNA processing and 30S ribosomal subunit biogenesis and possibly also in cell cycle regulation and energy metabolism.</text>
</comment>
<comment type="subunit">
    <text evidence="1">Monomer.</text>
</comment>
<comment type="subcellular location">
    <subcellularLocation>
        <location>Cytoplasm</location>
    </subcellularLocation>
    <subcellularLocation>
        <location evidence="1">Cell membrane</location>
        <topology evidence="1">Peripheral membrane protein</topology>
    </subcellularLocation>
</comment>
<comment type="similarity">
    <text evidence="1 2">Belongs to the TRAFAC class TrmE-Era-EngA-EngB-Septin-like GTPase superfamily. Era GTPase family.</text>
</comment>
<gene>
    <name evidence="1" type="primary">era</name>
    <name type="ordered locus">MAG1170</name>
</gene>
<protein>
    <recommendedName>
        <fullName evidence="1">GTPase Era</fullName>
    </recommendedName>
</protein>
<feature type="chain" id="PRO_1000121340" description="GTPase Era">
    <location>
        <begin position="1"/>
        <end position="290"/>
    </location>
</feature>
<feature type="domain" description="Era-type G" evidence="2">
    <location>
        <begin position="2"/>
        <end position="168"/>
    </location>
</feature>
<feature type="domain" description="KH type-2" evidence="1">
    <location>
        <begin position="199"/>
        <end position="275"/>
    </location>
</feature>
<feature type="region of interest" description="G1" evidence="2">
    <location>
        <begin position="10"/>
        <end position="17"/>
    </location>
</feature>
<feature type="region of interest" description="G2" evidence="2">
    <location>
        <begin position="36"/>
        <end position="40"/>
    </location>
</feature>
<feature type="region of interest" description="G3" evidence="2">
    <location>
        <begin position="57"/>
        <end position="60"/>
    </location>
</feature>
<feature type="region of interest" description="G4" evidence="2">
    <location>
        <begin position="118"/>
        <end position="121"/>
    </location>
</feature>
<feature type="region of interest" description="G5" evidence="2">
    <location>
        <begin position="147"/>
        <end position="149"/>
    </location>
</feature>
<feature type="binding site" evidence="1">
    <location>
        <begin position="10"/>
        <end position="17"/>
    </location>
    <ligand>
        <name>GTP</name>
        <dbReference type="ChEBI" id="CHEBI:37565"/>
    </ligand>
</feature>
<feature type="binding site" evidence="1">
    <location>
        <begin position="57"/>
        <end position="61"/>
    </location>
    <ligand>
        <name>GTP</name>
        <dbReference type="ChEBI" id="CHEBI:37565"/>
    </ligand>
</feature>
<feature type="binding site" evidence="1">
    <location>
        <begin position="118"/>
        <end position="121"/>
    </location>
    <ligand>
        <name>GTP</name>
        <dbReference type="ChEBI" id="CHEBI:37565"/>
    </ligand>
</feature>
<reference key="1">
    <citation type="journal article" date="2007" name="PLoS Genet.">
        <title>Being pathogenic, plastic, and sexual while living with a nearly minimal bacterial genome.</title>
        <authorList>
            <person name="Sirand-Pugnet P."/>
            <person name="Lartigue C."/>
            <person name="Marenda M."/>
            <person name="Jacob D."/>
            <person name="Barre A."/>
            <person name="Barbe V."/>
            <person name="Schenowitz C."/>
            <person name="Mangenot S."/>
            <person name="Couloux A."/>
            <person name="Segurens B."/>
            <person name="de Daruvar A."/>
            <person name="Blanchard A."/>
            <person name="Citti C."/>
        </authorList>
    </citation>
    <scope>NUCLEOTIDE SEQUENCE [LARGE SCALE GENOMIC DNA]</scope>
    <source>
        <strain>NCTC 10123 / CIP 59.7 / PG2</strain>
    </source>
</reference>
<organism>
    <name type="scientific">Mycoplasmopsis agalactiae (strain NCTC 10123 / CIP 59.7 / PG2)</name>
    <name type="common">Mycoplasma agalactiae</name>
    <dbReference type="NCBI Taxonomy" id="347257"/>
    <lineage>
        <taxon>Bacteria</taxon>
        <taxon>Bacillati</taxon>
        <taxon>Mycoplasmatota</taxon>
        <taxon>Mycoplasmoidales</taxon>
        <taxon>Metamycoplasmataceae</taxon>
        <taxon>Mycoplasmopsis</taxon>
    </lineage>
</organism>
<proteinExistence type="inferred from homology"/>
<dbReference type="EMBL" id="CU179680">
    <property type="protein sequence ID" value="CAL58815.1"/>
    <property type="molecule type" value="Genomic_DNA"/>
</dbReference>
<dbReference type="RefSeq" id="WP_011949297.1">
    <property type="nucleotide sequence ID" value="NC_009497.1"/>
</dbReference>
<dbReference type="SMR" id="A5IXQ6"/>
<dbReference type="STRING" id="347257.MAG1170"/>
<dbReference type="GeneID" id="93357883"/>
<dbReference type="KEGG" id="maa:MAG1170"/>
<dbReference type="HOGENOM" id="CLU_038009_1_0_14"/>
<dbReference type="Proteomes" id="UP000007065">
    <property type="component" value="Chromosome"/>
</dbReference>
<dbReference type="GO" id="GO:0005829">
    <property type="term" value="C:cytosol"/>
    <property type="evidence" value="ECO:0007669"/>
    <property type="project" value="TreeGrafter"/>
</dbReference>
<dbReference type="GO" id="GO:0005886">
    <property type="term" value="C:plasma membrane"/>
    <property type="evidence" value="ECO:0007669"/>
    <property type="project" value="UniProtKB-SubCell"/>
</dbReference>
<dbReference type="GO" id="GO:0005525">
    <property type="term" value="F:GTP binding"/>
    <property type="evidence" value="ECO:0007669"/>
    <property type="project" value="UniProtKB-UniRule"/>
</dbReference>
<dbReference type="GO" id="GO:0003924">
    <property type="term" value="F:GTPase activity"/>
    <property type="evidence" value="ECO:0007669"/>
    <property type="project" value="UniProtKB-UniRule"/>
</dbReference>
<dbReference type="GO" id="GO:0043024">
    <property type="term" value="F:ribosomal small subunit binding"/>
    <property type="evidence" value="ECO:0007669"/>
    <property type="project" value="TreeGrafter"/>
</dbReference>
<dbReference type="GO" id="GO:0070181">
    <property type="term" value="F:small ribosomal subunit rRNA binding"/>
    <property type="evidence" value="ECO:0007669"/>
    <property type="project" value="UniProtKB-UniRule"/>
</dbReference>
<dbReference type="GO" id="GO:0000028">
    <property type="term" value="P:ribosomal small subunit assembly"/>
    <property type="evidence" value="ECO:0007669"/>
    <property type="project" value="TreeGrafter"/>
</dbReference>
<dbReference type="CDD" id="cd04163">
    <property type="entry name" value="Era"/>
    <property type="match status" value="1"/>
</dbReference>
<dbReference type="CDD" id="cd22534">
    <property type="entry name" value="KH-II_Era"/>
    <property type="match status" value="1"/>
</dbReference>
<dbReference type="Gene3D" id="3.30.300.20">
    <property type="match status" value="1"/>
</dbReference>
<dbReference type="Gene3D" id="3.40.50.300">
    <property type="entry name" value="P-loop containing nucleotide triphosphate hydrolases"/>
    <property type="match status" value="1"/>
</dbReference>
<dbReference type="HAMAP" id="MF_00367">
    <property type="entry name" value="GTPase_Era"/>
    <property type="match status" value="1"/>
</dbReference>
<dbReference type="InterPro" id="IPR030388">
    <property type="entry name" value="G_ERA_dom"/>
</dbReference>
<dbReference type="InterPro" id="IPR006073">
    <property type="entry name" value="GTP-bd"/>
</dbReference>
<dbReference type="InterPro" id="IPR005662">
    <property type="entry name" value="GTPase_Era-like"/>
</dbReference>
<dbReference type="InterPro" id="IPR015946">
    <property type="entry name" value="KH_dom-like_a/b"/>
</dbReference>
<dbReference type="InterPro" id="IPR004044">
    <property type="entry name" value="KH_dom_type_2"/>
</dbReference>
<dbReference type="InterPro" id="IPR009019">
    <property type="entry name" value="KH_sf_prok-type"/>
</dbReference>
<dbReference type="InterPro" id="IPR027417">
    <property type="entry name" value="P-loop_NTPase"/>
</dbReference>
<dbReference type="InterPro" id="IPR005225">
    <property type="entry name" value="Small_GTP-bd"/>
</dbReference>
<dbReference type="NCBIfam" id="TIGR00436">
    <property type="entry name" value="era"/>
    <property type="match status" value="1"/>
</dbReference>
<dbReference type="NCBIfam" id="NF000908">
    <property type="entry name" value="PRK00089.1"/>
    <property type="match status" value="1"/>
</dbReference>
<dbReference type="NCBIfam" id="TIGR00231">
    <property type="entry name" value="small_GTP"/>
    <property type="match status" value="1"/>
</dbReference>
<dbReference type="PANTHER" id="PTHR42698">
    <property type="entry name" value="GTPASE ERA"/>
    <property type="match status" value="1"/>
</dbReference>
<dbReference type="PANTHER" id="PTHR42698:SF1">
    <property type="entry name" value="GTPASE ERA, MITOCHONDRIAL"/>
    <property type="match status" value="1"/>
</dbReference>
<dbReference type="Pfam" id="PF07650">
    <property type="entry name" value="KH_2"/>
    <property type="match status" value="1"/>
</dbReference>
<dbReference type="Pfam" id="PF01926">
    <property type="entry name" value="MMR_HSR1"/>
    <property type="match status" value="1"/>
</dbReference>
<dbReference type="SUPFAM" id="SSF52540">
    <property type="entry name" value="P-loop containing nucleoside triphosphate hydrolases"/>
    <property type="match status" value="1"/>
</dbReference>
<dbReference type="SUPFAM" id="SSF54814">
    <property type="entry name" value="Prokaryotic type KH domain (KH-domain type II)"/>
    <property type="match status" value="1"/>
</dbReference>
<dbReference type="PROSITE" id="PS51713">
    <property type="entry name" value="G_ERA"/>
    <property type="match status" value="1"/>
</dbReference>
<dbReference type="PROSITE" id="PS50823">
    <property type="entry name" value="KH_TYPE_2"/>
    <property type="match status" value="1"/>
</dbReference>
<keyword id="KW-1003">Cell membrane</keyword>
<keyword id="KW-0963">Cytoplasm</keyword>
<keyword id="KW-0342">GTP-binding</keyword>
<keyword id="KW-0472">Membrane</keyword>
<keyword id="KW-0547">Nucleotide-binding</keyword>
<keyword id="KW-1185">Reference proteome</keyword>
<keyword id="KW-0690">Ribosome biogenesis</keyword>
<keyword id="KW-0694">RNA-binding</keyword>
<keyword id="KW-0699">rRNA-binding</keyword>
<name>ERA_MYCAP</name>